<evidence type="ECO:0000255" key="1">
    <source>
        <dbReference type="HAMAP-Rule" id="MF_00034"/>
    </source>
</evidence>
<sequence>MRILGLDPGLARVGYGVLEVDEQRRNQPEMVDCGIISTDAGRGEGERMVEIARDLRQLLRLHRPDLAAVEKFFFYRSSNTIAVVQARGVLIMTLARFQIPTVEYPPMQIKLALAGSGHADKGEVQDAVMRELRLNERPKPDDAADALAVGLTAWFQR</sequence>
<proteinExistence type="inferred from homology"/>
<keyword id="KW-0963">Cytoplasm</keyword>
<keyword id="KW-0227">DNA damage</keyword>
<keyword id="KW-0233">DNA recombination</keyword>
<keyword id="KW-0234">DNA repair</keyword>
<keyword id="KW-0238">DNA-binding</keyword>
<keyword id="KW-0255">Endonuclease</keyword>
<keyword id="KW-0378">Hydrolase</keyword>
<keyword id="KW-0460">Magnesium</keyword>
<keyword id="KW-0479">Metal-binding</keyword>
<keyword id="KW-0540">Nuclease</keyword>
<keyword id="KW-1185">Reference proteome</keyword>
<comment type="function">
    <text evidence="1">The RuvA-RuvB-RuvC complex processes Holliday junction (HJ) DNA during genetic recombination and DNA repair. Endonuclease that resolves HJ intermediates. Cleaves cruciform DNA by making single-stranded nicks across the HJ at symmetrical positions within the homologous arms, yielding a 5'-phosphate and a 3'-hydroxyl group; requires a central core of homology in the junction. The consensus cleavage sequence is 5'-(A/T)TT(C/G)-3'. Cleavage occurs on the 3'-side of the TT dinucleotide at the point of strand exchange. HJ branch migration catalyzed by RuvA-RuvB allows RuvC to scan DNA until it finds its consensus sequence, where it cleaves and resolves the cruciform DNA.</text>
</comment>
<comment type="catalytic activity">
    <reaction evidence="1">
        <text>Endonucleolytic cleavage at a junction such as a reciprocal single-stranded crossover between two homologous DNA duplexes (Holliday junction).</text>
        <dbReference type="EC" id="3.1.21.10"/>
    </reaction>
</comment>
<comment type="cofactor">
    <cofactor evidence="1">
        <name>Mg(2+)</name>
        <dbReference type="ChEBI" id="CHEBI:18420"/>
    </cofactor>
    <text evidence="1">Binds 2 Mg(2+) ion per subunit.</text>
</comment>
<comment type="subunit">
    <text evidence="1">Homodimer which binds Holliday junction (HJ) DNA. The HJ becomes 2-fold symmetrical on binding to RuvC with unstacked arms; it has a different conformation from HJ DNA in complex with RuvA. In the full resolvosome a probable DNA-RuvA(4)-RuvB(12)-RuvC(2) complex forms which resolves the HJ.</text>
</comment>
<comment type="subcellular location">
    <subcellularLocation>
        <location evidence="1">Cytoplasm</location>
    </subcellularLocation>
</comment>
<comment type="similarity">
    <text evidence="1">Belongs to the RuvC family.</text>
</comment>
<accession>A5GRX2</accession>
<protein>
    <recommendedName>
        <fullName evidence="1">Crossover junction endodeoxyribonuclease RuvC</fullName>
        <ecNumber evidence="1">3.1.21.10</ecNumber>
    </recommendedName>
    <alternativeName>
        <fullName evidence="1">Holliday junction nuclease RuvC</fullName>
    </alternativeName>
    <alternativeName>
        <fullName evidence="1">Holliday junction resolvase RuvC</fullName>
    </alternativeName>
</protein>
<organism>
    <name type="scientific">Synechococcus sp. (strain RCC307)</name>
    <dbReference type="NCBI Taxonomy" id="316278"/>
    <lineage>
        <taxon>Bacteria</taxon>
        <taxon>Bacillati</taxon>
        <taxon>Cyanobacteriota</taxon>
        <taxon>Cyanophyceae</taxon>
        <taxon>Synechococcales</taxon>
        <taxon>Synechococcaceae</taxon>
        <taxon>Synechococcus</taxon>
    </lineage>
</organism>
<reference key="1">
    <citation type="submission" date="2006-05" db="EMBL/GenBank/DDBJ databases">
        <authorList>
            <consortium name="Genoscope"/>
        </authorList>
    </citation>
    <scope>NUCLEOTIDE SEQUENCE [LARGE SCALE GENOMIC DNA]</scope>
    <source>
        <strain>RCC307</strain>
    </source>
</reference>
<dbReference type="EC" id="3.1.21.10" evidence="1"/>
<dbReference type="EMBL" id="CT978603">
    <property type="protein sequence ID" value="CAK27631.1"/>
    <property type="molecule type" value="Genomic_DNA"/>
</dbReference>
<dbReference type="SMR" id="A5GRX2"/>
<dbReference type="STRING" id="316278.SynRCC307_0728"/>
<dbReference type="KEGG" id="syr:SynRCC307_0728"/>
<dbReference type="eggNOG" id="COG0817">
    <property type="taxonomic scope" value="Bacteria"/>
</dbReference>
<dbReference type="HOGENOM" id="CLU_091257_3_1_3"/>
<dbReference type="OrthoDB" id="9805499at2"/>
<dbReference type="Proteomes" id="UP000001115">
    <property type="component" value="Chromosome"/>
</dbReference>
<dbReference type="GO" id="GO:0005737">
    <property type="term" value="C:cytoplasm"/>
    <property type="evidence" value="ECO:0007669"/>
    <property type="project" value="UniProtKB-SubCell"/>
</dbReference>
<dbReference type="GO" id="GO:0048476">
    <property type="term" value="C:Holliday junction resolvase complex"/>
    <property type="evidence" value="ECO:0007669"/>
    <property type="project" value="UniProtKB-UniRule"/>
</dbReference>
<dbReference type="GO" id="GO:0008821">
    <property type="term" value="F:crossover junction DNA endonuclease activity"/>
    <property type="evidence" value="ECO:0007669"/>
    <property type="project" value="UniProtKB-UniRule"/>
</dbReference>
<dbReference type="GO" id="GO:0003677">
    <property type="term" value="F:DNA binding"/>
    <property type="evidence" value="ECO:0007669"/>
    <property type="project" value="UniProtKB-KW"/>
</dbReference>
<dbReference type="GO" id="GO:0000287">
    <property type="term" value="F:magnesium ion binding"/>
    <property type="evidence" value="ECO:0007669"/>
    <property type="project" value="UniProtKB-UniRule"/>
</dbReference>
<dbReference type="GO" id="GO:0006310">
    <property type="term" value="P:DNA recombination"/>
    <property type="evidence" value="ECO:0007669"/>
    <property type="project" value="UniProtKB-UniRule"/>
</dbReference>
<dbReference type="GO" id="GO:0006281">
    <property type="term" value="P:DNA repair"/>
    <property type="evidence" value="ECO:0007669"/>
    <property type="project" value="UniProtKB-UniRule"/>
</dbReference>
<dbReference type="CDD" id="cd16962">
    <property type="entry name" value="RuvC"/>
    <property type="match status" value="1"/>
</dbReference>
<dbReference type="FunFam" id="3.30.420.10:FF:000002">
    <property type="entry name" value="Crossover junction endodeoxyribonuclease RuvC"/>
    <property type="match status" value="1"/>
</dbReference>
<dbReference type="Gene3D" id="3.30.420.10">
    <property type="entry name" value="Ribonuclease H-like superfamily/Ribonuclease H"/>
    <property type="match status" value="1"/>
</dbReference>
<dbReference type="HAMAP" id="MF_00034">
    <property type="entry name" value="RuvC"/>
    <property type="match status" value="1"/>
</dbReference>
<dbReference type="InterPro" id="IPR012337">
    <property type="entry name" value="RNaseH-like_sf"/>
</dbReference>
<dbReference type="InterPro" id="IPR036397">
    <property type="entry name" value="RNaseH_sf"/>
</dbReference>
<dbReference type="InterPro" id="IPR002176">
    <property type="entry name" value="X-over_junc_endoDNase_RuvC"/>
</dbReference>
<dbReference type="NCBIfam" id="NF000711">
    <property type="entry name" value="PRK00039.2-1"/>
    <property type="match status" value="1"/>
</dbReference>
<dbReference type="PANTHER" id="PTHR30194">
    <property type="entry name" value="CROSSOVER JUNCTION ENDODEOXYRIBONUCLEASE RUVC"/>
    <property type="match status" value="1"/>
</dbReference>
<dbReference type="PANTHER" id="PTHR30194:SF3">
    <property type="entry name" value="CROSSOVER JUNCTION ENDODEOXYRIBONUCLEASE RUVC"/>
    <property type="match status" value="1"/>
</dbReference>
<dbReference type="Pfam" id="PF02075">
    <property type="entry name" value="RuvC"/>
    <property type="match status" value="1"/>
</dbReference>
<dbReference type="PRINTS" id="PR00696">
    <property type="entry name" value="RSOLVASERUVC"/>
</dbReference>
<dbReference type="SUPFAM" id="SSF53098">
    <property type="entry name" value="Ribonuclease H-like"/>
    <property type="match status" value="1"/>
</dbReference>
<feature type="chain" id="PRO_1000002843" description="Crossover junction endodeoxyribonuclease RuvC">
    <location>
        <begin position="1"/>
        <end position="157"/>
    </location>
</feature>
<feature type="active site" evidence="1">
    <location>
        <position position="7"/>
    </location>
</feature>
<feature type="active site" evidence="1">
    <location>
        <position position="70"/>
    </location>
</feature>
<feature type="active site" evidence="1">
    <location>
        <position position="142"/>
    </location>
</feature>
<feature type="binding site" evidence="1">
    <location>
        <position position="7"/>
    </location>
    <ligand>
        <name>Mg(2+)</name>
        <dbReference type="ChEBI" id="CHEBI:18420"/>
        <label>1</label>
    </ligand>
</feature>
<feature type="binding site" evidence="1">
    <location>
        <position position="70"/>
    </location>
    <ligand>
        <name>Mg(2+)</name>
        <dbReference type="ChEBI" id="CHEBI:18420"/>
        <label>2</label>
    </ligand>
</feature>
<feature type="binding site" evidence="1">
    <location>
        <position position="142"/>
    </location>
    <ligand>
        <name>Mg(2+)</name>
        <dbReference type="ChEBI" id="CHEBI:18420"/>
        <label>1</label>
    </ligand>
</feature>
<name>RUVC_SYNR3</name>
<gene>
    <name evidence="1" type="primary">ruvC</name>
    <name type="ordered locus">SynRCC307_0728</name>
</gene>